<name>RNPA_STRP6</name>
<dbReference type="EC" id="3.1.26.5" evidence="1"/>
<dbReference type="EMBL" id="CP000003">
    <property type="protein sequence ID" value="AAT86373.1"/>
    <property type="molecule type" value="Genomic_DNA"/>
</dbReference>
<dbReference type="RefSeq" id="WP_002992035.1">
    <property type="nucleotide sequence ID" value="NC_006086.1"/>
</dbReference>
<dbReference type="SMR" id="Q5XDZ0"/>
<dbReference type="GeneID" id="69900175"/>
<dbReference type="KEGG" id="spa:M6_Spy0238"/>
<dbReference type="HOGENOM" id="CLU_117179_9_1_9"/>
<dbReference type="Proteomes" id="UP000001167">
    <property type="component" value="Chromosome"/>
</dbReference>
<dbReference type="GO" id="GO:0030677">
    <property type="term" value="C:ribonuclease P complex"/>
    <property type="evidence" value="ECO:0007669"/>
    <property type="project" value="TreeGrafter"/>
</dbReference>
<dbReference type="GO" id="GO:0042781">
    <property type="term" value="F:3'-tRNA processing endoribonuclease activity"/>
    <property type="evidence" value="ECO:0007669"/>
    <property type="project" value="TreeGrafter"/>
</dbReference>
<dbReference type="GO" id="GO:0004526">
    <property type="term" value="F:ribonuclease P activity"/>
    <property type="evidence" value="ECO:0007669"/>
    <property type="project" value="UniProtKB-UniRule"/>
</dbReference>
<dbReference type="GO" id="GO:0000049">
    <property type="term" value="F:tRNA binding"/>
    <property type="evidence" value="ECO:0007669"/>
    <property type="project" value="UniProtKB-UniRule"/>
</dbReference>
<dbReference type="GO" id="GO:0001682">
    <property type="term" value="P:tRNA 5'-leader removal"/>
    <property type="evidence" value="ECO:0007669"/>
    <property type="project" value="UniProtKB-UniRule"/>
</dbReference>
<dbReference type="FunFam" id="3.30.230.10:FF:000021">
    <property type="entry name" value="Ribonuclease P protein component"/>
    <property type="match status" value="1"/>
</dbReference>
<dbReference type="Gene3D" id="3.30.230.10">
    <property type="match status" value="1"/>
</dbReference>
<dbReference type="HAMAP" id="MF_00227">
    <property type="entry name" value="RNase_P"/>
    <property type="match status" value="1"/>
</dbReference>
<dbReference type="InterPro" id="IPR020568">
    <property type="entry name" value="Ribosomal_Su5_D2-typ_SF"/>
</dbReference>
<dbReference type="InterPro" id="IPR014721">
    <property type="entry name" value="Ribsml_uS5_D2-typ_fold_subgr"/>
</dbReference>
<dbReference type="InterPro" id="IPR000100">
    <property type="entry name" value="RNase_P"/>
</dbReference>
<dbReference type="InterPro" id="IPR020539">
    <property type="entry name" value="RNase_P_CS"/>
</dbReference>
<dbReference type="NCBIfam" id="TIGR00188">
    <property type="entry name" value="rnpA"/>
    <property type="match status" value="1"/>
</dbReference>
<dbReference type="PANTHER" id="PTHR33992">
    <property type="entry name" value="RIBONUCLEASE P PROTEIN COMPONENT"/>
    <property type="match status" value="1"/>
</dbReference>
<dbReference type="PANTHER" id="PTHR33992:SF1">
    <property type="entry name" value="RIBONUCLEASE P PROTEIN COMPONENT"/>
    <property type="match status" value="1"/>
</dbReference>
<dbReference type="Pfam" id="PF00825">
    <property type="entry name" value="Ribonuclease_P"/>
    <property type="match status" value="1"/>
</dbReference>
<dbReference type="SUPFAM" id="SSF54211">
    <property type="entry name" value="Ribosomal protein S5 domain 2-like"/>
    <property type="match status" value="1"/>
</dbReference>
<dbReference type="PROSITE" id="PS00648">
    <property type="entry name" value="RIBONUCLEASE_P"/>
    <property type="match status" value="1"/>
</dbReference>
<feature type="chain" id="PRO_0000198544" description="Ribonuclease P protein component">
    <location>
        <begin position="1"/>
        <end position="119"/>
    </location>
</feature>
<keyword id="KW-0255">Endonuclease</keyword>
<keyword id="KW-0378">Hydrolase</keyword>
<keyword id="KW-0540">Nuclease</keyword>
<keyword id="KW-0694">RNA-binding</keyword>
<keyword id="KW-0819">tRNA processing</keyword>
<reference key="1">
    <citation type="journal article" date="2004" name="J. Infect. Dis.">
        <title>Progress toward characterization of the group A Streptococcus metagenome: complete genome sequence of a macrolide-resistant serotype M6 strain.</title>
        <authorList>
            <person name="Banks D.J."/>
            <person name="Porcella S.F."/>
            <person name="Barbian K.D."/>
            <person name="Beres S.B."/>
            <person name="Philips L.E."/>
            <person name="Voyich J.M."/>
            <person name="DeLeo F.R."/>
            <person name="Martin J.M."/>
            <person name="Somerville G.A."/>
            <person name="Musser J.M."/>
        </authorList>
    </citation>
    <scope>NUCLEOTIDE SEQUENCE [LARGE SCALE GENOMIC DNA]</scope>
    <source>
        <strain>ATCC BAA-946 / MGAS10394</strain>
    </source>
</reference>
<protein>
    <recommendedName>
        <fullName evidence="1">Ribonuclease P protein component</fullName>
        <shortName evidence="1">RNase P protein</shortName>
        <shortName evidence="1">RNaseP protein</shortName>
        <ecNumber evidence="1">3.1.26.5</ecNumber>
    </recommendedName>
    <alternativeName>
        <fullName evidence="1">Protein C5</fullName>
    </alternativeName>
</protein>
<proteinExistence type="inferred from homology"/>
<comment type="function">
    <text evidence="1">RNaseP catalyzes the removal of the 5'-leader sequence from pre-tRNA to produce the mature 5'-terminus. It can also cleave other RNA substrates such as 4.5S RNA. The protein component plays an auxiliary but essential role in vivo by binding to the 5'-leader sequence and broadening the substrate specificity of the ribozyme.</text>
</comment>
<comment type="catalytic activity">
    <reaction evidence="1">
        <text>Endonucleolytic cleavage of RNA, removing 5'-extranucleotides from tRNA precursor.</text>
        <dbReference type="EC" id="3.1.26.5"/>
    </reaction>
</comment>
<comment type="subunit">
    <text evidence="1">Consists of a catalytic RNA component (M1 or rnpB) and a protein subunit.</text>
</comment>
<comment type="similarity">
    <text evidence="1">Belongs to the RnpA family.</text>
</comment>
<evidence type="ECO:0000255" key="1">
    <source>
        <dbReference type="HAMAP-Rule" id="MF_00227"/>
    </source>
</evidence>
<accession>Q5XDZ0</accession>
<gene>
    <name evidence="1" type="primary">rnpA</name>
    <name type="ordered locus">M6_Spy0238</name>
</gene>
<organism>
    <name type="scientific">Streptococcus pyogenes serotype M6 (strain ATCC BAA-946 / MGAS10394)</name>
    <dbReference type="NCBI Taxonomy" id="286636"/>
    <lineage>
        <taxon>Bacteria</taxon>
        <taxon>Bacillati</taxon>
        <taxon>Bacillota</taxon>
        <taxon>Bacilli</taxon>
        <taxon>Lactobacillales</taxon>
        <taxon>Streptococcaceae</taxon>
        <taxon>Streptococcus</taxon>
    </lineage>
</organism>
<sequence>MKKTYRVKREKDFQAIFKDGKSTANRKFVIYHLNRGQDHFRVGISVGKKIGNAVTRNAVKRKIRHVIMALGHQLKSEDFVVIARKGVESLEYQELQQNLHHVLKLAQLLEKGFESEEKH</sequence>